<keyword id="KW-0030">Aminoacyl-tRNA synthetase</keyword>
<keyword id="KW-0067">ATP-binding</keyword>
<keyword id="KW-0963">Cytoplasm</keyword>
<keyword id="KW-0436">Ligase</keyword>
<keyword id="KW-0479">Metal-binding</keyword>
<keyword id="KW-0547">Nucleotide-binding</keyword>
<keyword id="KW-0648">Protein biosynthesis</keyword>
<keyword id="KW-0862">Zinc</keyword>
<gene>
    <name evidence="1" type="primary">cysS</name>
    <name type="ordered locus">Mevan_0382</name>
</gene>
<reference key="1">
    <citation type="submission" date="2007-06" db="EMBL/GenBank/DDBJ databases">
        <title>Complete sequence of Methanococcus vannielii SB.</title>
        <authorList>
            <consortium name="US DOE Joint Genome Institute"/>
            <person name="Copeland A."/>
            <person name="Lucas S."/>
            <person name="Lapidus A."/>
            <person name="Barry K."/>
            <person name="Glavina del Rio T."/>
            <person name="Dalin E."/>
            <person name="Tice H."/>
            <person name="Pitluck S."/>
            <person name="Chain P."/>
            <person name="Malfatti S."/>
            <person name="Shin M."/>
            <person name="Vergez L."/>
            <person name="Schmutz J."/>
            <person name="Larimer F."/>
            <person name="Land M."/>
            <person name="Hauser L."/>
            <person name="Kyrpides N."/>
            <person name="Anderson I."/>
            <person name="Sieprawska-Lupa M."/>
            <person name="Whitman W.B."/>
            <person name="Richardson P."/>
        </authorList>
    </citation>
    <scope>NUCLEOTIDE SEQUENCE [LARGE SCALE GENOMIC DNA]</scope>
    <source>
        <strain>ATCC 35089 / DSM 1224 / JCM 13029 / OCM 148 / SB</strain>
    </source>
</reference>
<name>SYC_METVS</name>
<dbReference type="EC" id="6.1.1.16" evidence="1"/>
<dbReference type="EMBL" id="CP000742">
    <property type="protein sequence ID" value="ABR54290.1"/>
    <property type="molecule type" value="Genomic_DNA"/>
</dbReference>
<dbReference type="RefSeq" id="WP_011972193.1">
    <property type="nucleotide sequence ID" value="NC_009634.1"/>
</dbReference>
<dbReference type="SMR" id="A6UP68"/>
<dbReference type="STRING" id="406327.Mevan_0382"/>
<dbReference type="GeneID" id="5325709"/>
<dbReference type="KEGG" id="mvn:Mevan_0382"/>
<dbReference type="eggNOG" id="arCOG00486">
    <property type="taxonomic scope" value="Archaea"/>
</dbReference>
<dbReference type="HOGENOM" id="CLU_013528_0_1_2"/>
<dbReference type="OrthoDB" id="9445at2157"/>
<dbReference type="Proteomes" id="UP000001107">
    <property type="component" value="Chromosome"/>
</dbReference>
<dbReference type="GO" id="GO:0005737">
    <property type="term" value="C:cytoplasm"/>
    <property type="evidence" value="ECO:0007669"/>
    <property type="project" value="UniProtKB-SubCell"/>
</dbReference>
<dbReference type="GO" id="GO:0005524">
    <property type="term" value="F:ATP binding"/>
    <property type="evidence" value="ECO:0007669"/>
    <property type="project" value="UniProtKB-UniRule"/>
</dbReference>
<dbReference type="GO" id="GO:0004817">
    <property type="term" value="F:cysteine-tRNA ligase activity"/>
    <property type="evidence" value="ECO:0007669"/>
    <property type="project" value="UniProtKB-UniRule"/>
</dbReference>
<dbReference type="GO" id="GO:0008270">
    <property type="term" value="F:zinc ion binding"/>
    <property type="evidence" value="ECO:0007669"/>
    <property type="project" value="UniProtKB-UniRule"/>
</dbReference>
<dbReference type="GO" id="GO:0006423">
    <property type="term" value="P:cysteinyl-tRNA aminoacylation"/>
    <property type="evidence" value="ECO:0007669"/>
    <property type="project" value="UniProtKB-UniRule"/>
</dbReference>
<dbReference type="CDD" id="cd00672">
    <property type="entry name" value="CysRS_core"/>
    <property type="match status" value="1"/>
</dbReference>
<dbReference type="FunFam" id="3.40.50.620:FF:000130">
    <property type="entry name" value="Cysteine--tRNA ligase"/>
    <property type="match status" value="1"/>
</dbReference>
<dbReference type="Gene3D" id="1.20.120.1910">
    <property type="entry name" value="Cysteine-tRNA ligase, C-terminal anti-codon recognition domain"/>
    <property type="match status" value="1"/>
</dbReference>
<dbReference type="Gene3D" id="3.40.50.620">
    <property type="entry name" value="HUPs"/>
    <property type="match status" value="1"/>
</dbReference>
<dbReference type="HAMAP" id="MF_00041">
    <property type="entry name" value="Cys_tRNA_synth"/>
    <property type="match status" value="1"/>
</dbReference>
<dbReference type="InterPro" id="IPR015803">
    <property type="entry name" value="Cys-tRNA-ligase"/>
</dbReference>
<dbReference type="InterPro" id="IPR015273">
    <property type="entry name" value="Cys-tRNA-synt_Ia_DALR"/>
</dbReference>
<dbReference type="InterPro" id="IPR024909">
    <property type="entry name" value="Cys-tRNA/MSH_ligase"/>
</dbReference>
<dbReference type="InterPro" id="IPR014729">
    <property type="entry name" value="Rossmann-like_a/b/a_fold"/>
</dbReference>
<dbReference type="InterPro" id="IPR032678">
    <property type="entry name" value="tRNA-synt_1_cat_dom"/>
</dbReference>
<dbReference type="InterPro" id="IPR009080">
    <property type="entry name" value="tRNAsynth_Ia_anticodon-bd"/>
</dbReference>
<dbReference type="NCBIfam" id="TIGR00435">
    <property type="entry name" value="cysS"/>
    <property type="match status" value="1"/>
</dbReference>
<dbReference type="PANTHER" id="PTHR10890:SF3">
    <property type="entry name" value="CYSTEINE--TRNA LIGASE, CYTOPLASMIC"/>
    <property type="match status" value="1"/>
</dbReference>
<dbReference type="PANTHER" id="PTHR10890">
    <property type="entry name" value="CYSTEINYL-TRNA SYNTHETASE"/>
    <property type="match status" value="1"/>
</dbReference>
<dbReference type="Pfam" id="PF09190">
    <property type="entry name" value="DALR_2"/>
    <property type="match status" value="1"/>
</dbReference>
<dbReference type="Pfam" id="PF01406">
    <property type="entry name" value="tRNA-synt_1e"/>
    <property type="match status" value="1"/>
</dbReference>
<dbReference type="PRINTS" id="PR00983">
    <property type="entry name" value="TRNASYNTHCYS"/>
</dbReference>
<dbReference type="SMART" id="SM00840">
    <property type="entry name" value="DALR_2"/>
    <property type="match status" value="1"/>
</dbReference>
<dbReference type="SUPFAM" id="SSF47323">
    <property type="entry name" value="Anticodon-binding domain of a subclass of class I aminoacyl-tRNA synthetases"/>
    <property type="match status" value="1"/>
</dbReference>
<dbReference type="SUPFAM" id="SSF52374">
    <property type="entry name" value="Nucleotidylyl transferase"/>
    <property type="match status" value="1"/>
</dbReference>
<feature type="chain" id="PRO_1000006593" description="Cysteine--tRNA ligase">
    <location>
        <begin position="1"/>
        <end position="475"/>
    </location>
</feature>
<feature type="short sequence motif" description="'HIGH' region">
    <location>
        <begin position="30"/>
        <end position="40"/>
    </location>
</feature>
<feature type="short sequence motif" description="'KMSKS' region">
    <location>
        <begin position="265"/>
        <end position="269"/>
    </location>
</feature>
<feature type="binding site" evidence="1">
    <location>
        <position position="28"/>
    </location>
    <ligand>
        <name>Zn(2+)</name>
        <dbReference type="ChEBI" id="CHEBI:29105"/>
    </ligand>
</feature>
<feature type="binding site" evidence="1">
    <location>
        <position position="208"/>
    </location>
    <ligand>
        <name>Zn(2+)</name>
        <dbReference type="ChEBI" id="CHEBI:29105"/>
    </ligand>
</feature>
<feature type="binding site" evidence="1">
    <location>
        <position position="233"/>
    </location>
    <ligand>
        <name>Zn(2+)</name>
        <dbReference type="ChEBI" id="CHEBI:29105"/>
    </ligand>
</feature>
<feature type="binding site" evidence="1">
    <location>
        <position position="237"/>
    </location>
    <ligand>
        <name>Zn(2+)</name>
        <dbReference type="ChEBI" id="CHEBI:29105"/>
    </ligand>
</feature>
<feature type="binding site" evidence="1">
    <location>
        <position position="268"/>
    </location>
    <ligand>
        <name>ATP</name>
        <dbReference type="ChEBI" id="CHEBI:30616"/>
    </ligand>
</feature>
<proteinExistence type="inferred from homology"/>
<sequence length="475" mass="55167">MLRIYNTITKSEEVFKTLNNEEVKIYVCGPTVYDETHIGHGRTYVSFDIIRRYLEHIGYSVKLVINFTDIDDKIINRALNLNVTPKKISEKYIEIFLNDMKTLNVKPADIYPKVTENIPEIISFIDKLIEKGFAYKTDSGVYFEIEKFKDYGKLSNINLENLISEDKLESKSEKKNRFDFALWKNKKSGEPYWKSPFGDGRPGWHIECSVMSMKYLGEQFDIHGGGRDLSFPHHENEIAQSSAYSGKNWVNYWVHTGFVMVNGEKMSKSLGNFVTISEISKKYSPEVLRLFFIQRHYKSPIDYTEESMEHAKASLQKLYNVIESVRIALENPVNSVWDENEAFFYNVLKNSKINFYRAMDSDFNSVNALKTVFEVSNSVTKYLSVSKSPNVALLIKTLDFFKNVGEIFGLFEGYFYKSSNVKEESLIKFLVDLRDDLRSKKNYETSDKIRDGLKELGYQIEDSSKENTVFKKINI</sequence>
<evidence type="ECO:0000255" key="1">
    <source>
        <dbReference type="HAMAP-Rule" id="MF_00041"/>
    </source>
</evidence>
<organism>
    <name type="scientific">Methanococcus vannielii (strain ATCC 35089 / DSM 1224 / JCM 13029 / OCM 148 / SB)</name>
    <dbReference type="NCBI Taxonomy" id="406327"/>
    <lineage>
        <taxon>Archaea</taxon>
        <taxon>Methanobacteriati</taxon>
        <taxon>Methanobacteriota</taxon>
        <taxon>Methanomada group</taxon>
        <taxon>Methanococci</taxon>
        <taxon>Methanococcales</taxon>
        <taxon>Methanococcaceae</taxon>
        <taxon>Methanococcus</taxon>
    </lineage>
</organism>
<accession>A6UP68</accession>
<protein>
    <recommendedName>
        <fullName evidence="1">Cysteine--tRNA ligase</fullName>
        <ecNumber evidence="1">6.1.1.16</ecNumber>
    </recommendedName>
    <alternativeName>
        <fullName evidence="1">Cysteinyl-tRNA synthetase</fullName>
        <shortName evidence="1">CysRS</shortName>
    </alternativeName>
</protein>
<comment type="catalytic activity">
    <reaction evidence="1">
        <text>tRNA(Cys) + L-cysteine + ATP = L-cysteinyl-tRNA(Cys) + AMP + diphosphate</text>
        <dbReference type="Rhea" id="RHEA:17773"/>
        <dbReference type="Rhea" id="RHEA-COMP:9661"/>
        <dbReference type="Rhea" id="RHEA-COMP:9679"/>
        <dbReference type="ChEBI" id="CHEBI:30616"/>
        <dbReference type="ChEBI" id="CHEBI:33019"/>
        <dbReference type="ChEBI" id="CHEBI:35235"/>
        <dbReference type="ChEBI" id="CHEBI:78442"/>
        <dbReference type="ChEBI" id="CHEBI:78517"/>
        <dbReference type="ChEBI" id="CHEBI:456215"/>
        <dbReference type="EC" id="6.1.1.16"/>
    </reaction>
</comment>
<comment type="cofactor">
    <cofactor evidence="1">
        <name>Zn(2+)</name>
        <dbReference type="ChEBI" id="CHEBI:29105"/>
    </cofactor>
    <text evidence="1">Binds 1 zinc ion per subunit.</text>
</comment>
<comment type="subcellular location">
    <subcellularLocation>
        <location evidence="1">Cytoplasm</location>
    </subcellularLocation>
</comment>
<comment type="similarity">
    <text evidence="1">Belongs to the class-I aminoacyl-tRNA synthetase family.</text>
</comment>